<gene>
    <name evidence="1" type="primary">yidC</name>
    <name type="ordered locus">A2cp1_4514</name>
</gene>
<comment type="function">
    <text evidence="1">Required for the insertion and/or proper folding and/or complex formation of integral membrane proteins into the membrane. Involved in integration of membrane proteins that insert both dependently and independently of the Sec translocase complex, as well as at least some lipoproteins. Aids folding of multispanning membrane proteins.</text>
</comment>
<comment type="subunit">
    <text evidence="1">Interacts with the Sec translocase complex via SecD. Specifically interacts with transmembrane segments of nascent integral membrane proteins during membrane integration.</text>
</comment>
<comment type="subcellular location">
    <subcellularLocation>
        <location evidence="1">Cell inner membrane</location>
        <topology evidence="1">Multi-pass membrane protein</topology>
    </subcellularLocation>
</comment>
<comment type="similarity">
    <text evidence="1">Belongs to the OXA1/ALB3/YidC family. Type 1 subfamily.</text>
</comment>
<reference key="1">
    <citation type="submission" date="2009-01" db="EMBL/GenBank/DDBJ databases">
        <title>Complete sequence of Anaeromyxobacter dehalogenans 2CP-1.</title>
        <authorList>
            <person name="Lucas S."/>
            <person name="Copeland A."/>
            <person name="Lapidus A."/>
            <person name="Glavina del Rio T."/>
            <person name="Dalin E."/>
            <person name="Tice H."/>
            <person name="Bruce D."/>
            <person name="Goodwin L."/>
            <person name="Pitluck S."/>
            <person name="Saunders E."/>
            <person name="Brettin T."/>
            <person name="Detter J.C."/>
            <person name="Han C."/>
            <person name="Larimer F."/>
            <person name="Land M."/>
            <person name="Hauser L."/>
            <person name="Kyrpides N."/>
            <person name="Ovchinnikova G."/>
            <person name="Beliaev A.S."/>
            <person name="Richardson P."/>
        </authorList>
    </citation>
    <scope>NUCLEOTIDE SEQUENCE [LARGE SCALE GENOMIC DNA]</scope>
    <source>
        <strain>2CP-1 / ATCC BAA-258</strain>
    </source>
</reference>
<name>YIDC_ANAD2</name>
<accession>B8JDK5</accession>
<feature type="chain" id="PRO_1000187627" description="Membrane protein insertase YidC">
    <location>
        <begin position="1"/>
        <end position="546"/>
    </location>
</feature>
<feature type="transmembrane region" description="Helical" evidence="1">
    <location>
        <begin position="8"/>
        <end position="28"/>
    </location>
</feature>
<feature type="transmembrane region" description="Helical" evidence="1">
    <location>
        <begin position="326"/>
        <end position="346"/>
    </location>
</feature>
<feature type="transmembrane region" description="Helical" evidence="1">
    <location>
        <begin position="356"/>
        <end position="376"/>
    </location>
</feature>
<feature type="transmembrane region" description="Helical" evidence="1">
    <location>
        <begin position="422"/>
        <end position="442"/>
    </location>
</feature>
<feature type="transmembrane region" description="Helical" evidence="1">
    <location>
        <begin position="459"/>
        <end position="479"/>
    </location>
</feature>
<feature type="transmembrane region" description="Helical" evidence="1">
    <location>
        <begin position="498"/>
        <end position="518"/>
    </location>
</feature>
<feature type="region of interest" description="Disordered" evidence="2">
    <location>
        <begin position="31"/>
        <end position="70"/>
    </location>
</feature>
<feature type="compositionally biased region" description="Low complexity" evidence="2">
    <location>
        <begin position="39"/>
        <end position="60"/>
    </location>
</feature>
<evidence type="ECO:0000255" key="1">
    <source>
        <dbReference type="HAMAP-Rule" id="MF_01810"/>
    </source>
</evidence>
<evidence type="ECO:0000256" key="2">
    <source>
        <dbReference type="SAM" id="MobiDB-lite"/>
    </source>
</evidence>
<dbReference type="EMBL" id="CP001359">
    <property type="protein sequence ID" value="ACL67831.1"/>
    <property type="molecule type" value="Genomic_DNA"/>
</dbReference>
<dbReference type="RefSeq" id="WP_015935506.1">
    <property type="nucleotide sequence ID" value="NC_011891.1"/>
</dbReference>
<dbReference type="SMR" id="B8JDK5"/>
<dbReference type="KEGG" id="acp:A2cp1_4514"/>
<dbReference type="HOGENOM" id="CLU_016535_3_0_7"/>
<dbReference type="Proteomes" id="UP000007089">
    <property type="component" value="Chromosome"/>
</dbReference>
<dbReference type="GO" id="GO:0005886">
    <property type="term" value="C:plasma membrane"/>
    <property type="evidence" value="ECO:0007669"/>
    <property type="project" value="UniProtKB-SubCell"/>
</dbReference>
<dbReference type="GO" id="GO:0032977">
    <property type="term" value="F:membrane insertase activity"/>
    <property type="evidence" value="ECO:0007669"/>
    <property type="project" value="InterPro"/>
</dbReference>
<dbReference type="GO" id="GO:0051205">
    <property type="term" value="P:protein insertion into membrane"/>
    <property type="evidence" value="ECO:0007669"/>
    <property type="project" value="TreeGrafter"/>
</dbReference>
<dbReference type="GO" id="GO:0015031">
    <property type="term" value="P:protein transport"/>
    <property type="evidence" value="ECO:0007669"/>
    <property type="project" value="UniProtKB-KW"/>
</dbReference>
<dbReference type="CDD" id="cd20070">
    <property type="entry name" value="5TM_YidC_Alb3"/>
    <property type="match status" value="1"/>
</dbReference>
<dbReference type="CDD" id="cd19961">
    <property type="entry name" value="EcYidC-like_peri"/>
    <property type="match status" value="1"/>
</dbReference>
<dbReference type="Gene3D" id="2.70.98.90">
    <property type="match status" value="1"/>
</dbReference>
<dbReference type="HAMAP" id="MF_01810">
    <property type="entry name" value="YidC_type1"/>
    <property type="match status" value="1"/>
</dbReference>
<dbReference type="InterPro" id="IPR019998">
    <property type="entry name" value="Membr_insert_YidC"/>
</dbReference>
<dbReference type="InterPro" id="IPR028053">
    <property type="entry name" value="Membr_insert_YidC_N"/>
</dbReference>
<dbReference type="InterPro" id="IPR001708">
    <property type="entry name" value="YidC/ALB3/OXA1/COX18"/>
</dbReference>
<dbReference type="InterPro" id="IPR028055">
    <property type="entry name" value="YidC/Oxa/ALB_C"/>
</dbReference>
<dbReference type="InterPro" id="IPR047196">
    <property type="entry name" value="YidC_ALB_C"/>
</dbReference>
<dbReference type="InterPro" id="IPR038221">
    <property type="entry name" value="YidC_periplasmic_sf"/>
</dbReference>
<dbReference type="NCBIfam" id="TIGR03593">
    <property type="entry name" value="yidC_nterm"/>
    <property type="match status" value="1"/>
</dbReference>
<dbReference type="NCBIfam" id="TIGR03592">
    <property type="entry name" value="yidC_oxa1_cterm"/>
    <property type="match status" value="1"/>
</dbReference>
<dbReference type="PANTHER" id="PTHR12428:SF65">
    <property type="entry name" value="CYTOCHROME C OXIDASE ASSEMBLY PROTEIN COX18, MITOCHONDRIAL"/>
    <property type="match status" value="1"/>
</dbReference>
<dbReference type="PANTHER" id="PTHR12428">
    <property type="entry name" value="OXA1"/>
    <property type="match status" value="1"/>
</dbReference>
<dbReference type="Pfam" id="PF02096">
    <property type="entry name" value="60KD_IMP"/>
    <property type="match status" value="1"/>
</dbReference>
<dbReference type="Pfam" id="PF14849">
    <property type="entry name" value="YidC_periplas"/>
    <property type="match status" value="1"/>
</dbReference>
<dbReference type="PRINTS" id="PR00701">
    <property type="entry name" value="60KDINNERMP"/>
</dbReference>
<dbReference type="PRINTS" id="PR01900">
    <property type="entry name" value="YIDCPROTEIN"/>
</dbReference>
<keyword id="KW-0997">Cell inner membrane</keyword>
<keyword id="KW-1003">Cell membrane</keyword>
<keyword id="KW-0143">Chaperone</keyword>
<keyword id="KW-0472">Membrane</keyword>
<keyword id="KW-0653">Protein transport</keyword>
<keyword id="KW-0812">Transmembrane</keyword>
<keyword id="KW-1133">Transmembrane helix</keyword>
<keyword id="KW-0813">Transport</keyword>
<organism>
    <name type="scientific">Anaeromyxobacter dehalogenans (strain 2CP-1 / ATCC BAA-258)</name>
    <dbReference type="NCBI Taxonomy" id="455488"/>
    <lineage>
        <taxon>Bacteria</taxon>
        <taxon>Pseudomonadati</taxon>
        <taxon>Myxococcota</taxon>
        <taxon>Myxococcia</taxon>
        <taxon>Myxococcales</taxon>
        <taxon>Cystobacterineae</taxon>
        <taxon>Anaeromyxobacteraceae</taxon>
        <taxon>Anaeromyxobacter</taxon>
    </lineage>
</organism>
<sequence>MGPDNRRILLATVLSVGILILWQVIFPTKKAPPKPAHPPAAEVAKPAAPASPAPGAAAPAVPAPPPDAPEETVTLAGKGFEATLTTYGGALKSLRLEGDKFRKQEKDREVQIDLVHVTSGQPYPLSLSASPELGGAVDVAADPGARAPMRIVANDASSVTFEGRVGNLAARKTFRVTGKPYELALDVELSGGAGSGTVGVLYPAFMPPDTKSGGIFSGPPLDFVRPVCRAGTTTERFDLAKEGAPEKLEGQVSWAGVDQHYFVAAVLPAEPIGTCTFVRGPVKGAGLAAVAVPVEGGARKLSLTVYAGPKDLDTLRGYGRGFESAIDYGAVAKFFALFARGLLYVMRWLEAIVRNWGVAIILLTVLVRLVLFPLTYKSMQSMNEMRKLQPEIEKLKAKFGDDREKMNLAVMQLYQKHKVNPLGGCLPMLLQMPVWFALYAALQTSVELYREPFLWMKDLTAHDPYFILPIAMGISSFVMQKLSPQPADNAQAKMMLYFFPGFFTVIMLFVPGGLTLYIFVNNLLSIVQQQLMMKHQQAAPAPAAGK</sequence>
<proteinExistence type="inferred from homology"/>
<protein>
    <recommendedName>
        <fullName evidence="1">Membrane protein insertase YidC</fullName>
    </recommendedName>
    <alternativeName>
        <fullName evidence="1">Foldase YidC</fullName>
    </alternativeName>
    <alternativeName>
        <fullName evidence="1">Membrane integrase YidC</fullName>
    </alternativeName>
    <alternativeName>
        <fullName evidence="1">Membrane protein YidC</fullName>
    </alternativeName>
</protein>